<comment type="function">
    <text evidence="1">Site-specific tyrosine recombinase, which acts by catalyzing the cutting and rejoining of the recombining DNA molecules. The XerC-XerD complex is essential to convert dimers of the bacterial chromosome into monomers to permit their segregation at cell division. It also contributes to the segregational stability of plasmids.</text>
</comment>
<comment type="subunit">
    <text evidence="1">Forms a cyclic heterotetrameric complex composed of two molecules of XerC and two molecules of XerD.</text>
</comment>
<comment type="subcellular location">
    <subcellularLocation>
        <location evidence="1">Cytoplasm</location>
    </subcellularLocation>
</comment>
<comment type="similarity">
    <text evidence="1">Belongs to the 'phage' integrase family. XerC subfamily.</text>
</comment>
<accession>Q0VM16</accession>
<protein>
    <recommendedName>
        <fullName evidence="1">Tyrosine recombinase XerC</fullName>
    </recommendedName>
</protein>
<proteinExistence type="inferred from homology"/>
<reference key="1">
    <citation type="journal article" date="2006" name="Nat. Biotechnol.">
        <title>Genome sequence of the ubiquitous hydrocarbon-degrading marine bacterium Alcanivorax borkumensis.</title>
        <authorList>
            <person name="Schneiker S."/>
            <person name="Martins dos Santos V.A.P."/>
            <person name="Bartels D."/>
            <person name="Bekel T."/>
            <person name="Brecht M."/>
            <person name="Buhrmester J."/>
            <person name="Chernikova T.N."/>
            <person name="Denaro R."/>
            <person name="Ferrer M."/>
            <person name="Gertler C."/>
            <person name="Goesmann A."/>
            <person name="Golyshina O.V."/>
            <person name="Kaminski F."/>
            <person name="Khachane A.N."/>
            <person name="Lang S."/>
            <person name="Linke B."/>
            <person name="McHardy A.C."/>
            <person name="Meyer F."/>
            <person name="Nechitaylo T."/>
            <person name="Puehler A."/>
            <person name="Regenhardt D."/>
            <person name="Rupp O."/>
            <person name="Sabirova J.S."/>
            <person name="Selbitschka W."/>
            <person name="Yakimov M.M."/>
            <person name="Timmis K.N."/>
            <person name="Vorhoelter F.-J."/>
            <person name="Weidner S."/>
            <person name="Kaiser O."/>
            <person name="Golyshin P.N."/>
        </authorList>
    </citation>
    <scope>NUCLEOTIDE SEQUENCE [LARGE SCALE GENOMIC DNA]</scope>
    <source>
        <strain>ATCC 700651 / DSM 11573 / NCIMB 13689 / SK2</strain>
    </source>
</reference>
<name>XERC_ALCBS</name>
<sequence>MDSDSHNTLQTVNTFLTHLASERRLSPHTVNGYQRDLIEARTLLGSQPWDTLTVHDMRSLAASLHRQGKSGKTIQRMLSTLRTFFRYLMREGLARDNPAIDIRAPKSGKRLPKALDVDQVSHLLDAGTSNSEPLALRDQAIMELLYACGLRLAELLSLNLDSIDLHESQLLVTGKGNKTRQLPVGKPALTAVRRWLQVRPMLIKSSDQNALFISKNGRRLSPSSVQQRLKRHALERGLDAHLHPHKLRHSFATHLLESSGDLRAVQELLGHADLATTQVYTHLDFQHLAQVYDGAHPRAQRRKDDDE</sequence>
<dbReference type="EMBL" id="AM286690">
    <property type="protein sequence ID" value="CAL17782.1"/>
    <property type="molecule type" value="Genomic_DNA"/>
</dbReference>
<dbReference type="RefSeq" id="WP_011589608.1">
    <property type="nucleotide sequence ID" value="NC_008260.1"/>
</dbReference>
<dbReference type="SMR" id="Q0VM16"/>
<dbReference type="STRING" id="393595.ABO_2334"/>
<dbReference type="KEGG" id="abo:ABO_2334"/>
<dbReference type="eggNOG" id="COG4973">
    <property type="taxonomic scope" value="Bacteria"/>
</dbReference>
<dbReference type="HOGENOM" id="CLU_027562_9_0_6"/>
<dbReference type="OrthoDB" id="9801717at2"/>
<dbReference type="Proteomes" id="UP000008871">
    <property type="component" value="Chromosome"/>
</dbReference>
<dbReference type="GO" id="GO:0005737">
    <property type="term" value="C:cytoplasm"/>
    <property type="evidence" value="ECO:0007669"/>
    <property type="project" value="UniProtKB-SubCell"/>
</dbReference>
<dbReference type="GO" id="GO:0003677">
    <property type="term" value="F:DNA binding"/>
    <property type="evidence" value="ECO:0007669"/>
    <property type="project" value="UniProtKB-KW"/>
</dbReference>
<dbReference type="GO" id="GO:0009037">
    <property type="term" value="F:tyrosine-based site-specific recombinase activity"/>
    <property type="evidence" value="ECO:0007669"/>
    <property type="project" value="UniProtKB-UniRule"/>
</dbReference>
<dbReference type="GO" id="GO:0051301">
    <property type="term" value="P:cell division"/>
    <property type="evidence" value="ECO:0007669"/>
    <property type="project" value="UniProtKB-KW"/>
</dbReference>
<dbReference type="GO" id="GO:0007059">
    <property type="term" value="P:chromosome segregation"/>
    <property type="evidence" value="ECO:0007669"/>
    <property type="project" value="UniProtKB-UniRule"/>
</dbReference>
<dbReference type="GO" id="GO:0006313">
    <property type="term" value="P:DNA transposition"/>
    <property type="evidence" value="ECO:0007669"/>
    <property type="project" value="UniProtKB-UniRule"/>
</dbReference>
<dbReference type="CDD" id="cd00798">
    <property type="entry name" value="INT_XerDC_C"/>
    <property type="match status" value="1"/>
</dbReference>
<dbReference type="Gene3D" id="1.10.150.130">
    <property type="match status" value="1"/>
</dbReference>
<dbReference type="Gene3D" id="1.10.443.10">
    <property type="entry name" value="Intergrase catalytic core"/>
    <property type="match status" value="1"/>
</dbReference>
<dbReference type="HAMAP" id="MF_01808">
    <property type="entry name" value="Recomb_XerC_XerD"/>
    <property type="match status" value="1"/>
</dbReference>
<dbReference type="InterPro" id="IPR044068">
    <property type="entry name" value="CB"/>
</dbReference>
<dbReference type="InterPro" id="IPR011010">
    <property type="entry name" value="DNA_brk_join_enz"/>
</dbReference>
<dbReference type="InterPro" id="IPR013762">
    <property type="entry name" value="Integrase-like_cat_sf"/>
</dbReference>
<dbReference type="InterPro" id="IPR002104">
    <property type="entry name" value="Integrase_catalytic"/>
</dbReference>
<dbReference type="InterPro" id="IPR010998">
    <property type="entry name" value="Integrase_recombinase_N"/>
</dbReference>
<dbReference type="InterPro" id="IPR004107">
    <property type="entry name" value="Integrase_SAM-like_N"/>
</dbReference>
<dbReference type="InterPro" id="IPR011931">
    <property type="entry name" value="Recomb_XerC"/>
</dbReference>
<dbReference type="InterPro" id="IPR023009">
    <property type="entry name" value="Tyrosine_recombinase_XerC/XerD"/>
</dbReference>
<dbReference type="InterPro" id="IPR050090">
    <property type="entry name" value="Tyrosine_recombinase_XerCD"/>
</dbReference>
<dbReference type="NCBIfam" id="NF001399">
    <property type="entry name" value="PRK00283.1"/>
    <property type="match status" value="1"/>
</dbReference>
<dbReference type="NCBIfam" id="TIGR02224">
    <property type="entry name" value="recomb_XerC"/>
    <property type="match status" value="1"/>
</dbReference>
<dbReference type="PANTHER" id="PTHR30349">
    <property type="entry name" value="PHAGE INTEGRASE-RELATED"/>
    <property type="match status" value="1"/>
</dbReference>
<dbReference type="PANTHER" id="PTHR30349:SF81">
    <property type="entry name" value="TYROSINE RECOMBINASE XERC"/>
    <property type="match status" value="1"/>
</dbReference>
<dbReference type="Pfam" id="PF02899">
    <property type="entry name" value="Phage_int_SAM_1"/>
    <property type="match status" value="1"/>
</dbReference>
<dbReference type="Pfam" id="PF00589">
    <property type="entry name" value="Phage_integrase"/>
    <property type="match status" value="1"/>
</dbReference>
<dbReference type="SUPFAM" id="SSF56349">
    <property type="entry name" value="DNA breaking-rejoining enzymes"/>
    <property type="match status" value="1"/>
</dbReference>
<dbReference type="PROSITE" id="PS51900">
    <property type="entry name" value="CB"/>
    <property type="match status" value="1"/>
</dbReference>
<dbReference type="PROSITE" id="PS51898">
    <property type="entry name" value="TYR_RECOMBINASE"/>
    <property type="match status" value="1"/>
</dbReference>
<evidence type="ECO:0000255" key="1">
    <source>
        <dbReference type="HAMAP-Rule" id="MF_01808"/>
    </source>
</evidence>
<evidence type="ECO:0000255" key="2">
    <source>
        <dbReference type="PROSITE-ProRule" id="PRU01246"/>
    </source>
</evidence>
<evidence type="ECO:0000255" key="3">
    <source>
        <dbReference type="PROSITE-ProRule" id="PRU01248"/>
    </source>
</evidence>
<organism>
    <name type="scientific">Alcanivorax borkumensis (strain ATCC 700651 / DSM 11573 / NCIMB 13689 / SK2)</name>
    <dbReference type="NCBI Taxonomy" id="393595"/>
    <lineage>
        <taxon>Bacteria</taxon>
        <taxon>Pseudomonadati</taxon>
        <taxon>Pseudomonadota</taxon>
        <taxon>Gammaproteobacteria</taxon>
        <taxon>Oceanospirillales</taxon>
        <taxon>Alcanivoracaceae</taxon>
        <taxon>Alcanivorax</taxon>
    </lineage>
</organism>
<feature type="chain" id="PRO_1000069992" description="Tyrosine recombinase XerC">
    <location>
        <begin position="1"/>
        <end position="307"/>
    </location>
</feature>
<feature type="domain" description="Core-binding (CB)" evidence="3">
    <location>
        <begin position="6"/>
        <end position="89"/>
    </location>
</feature>
<feature type="domain" description="Tyr recombinase" evidence="2">
    <location>
        <begin position="110"/>
        <end position="293"/>
    </location>
</feature>
<feature type="active site" evidence="1">
    <location>
        <position position="151"/>
    </location>
</feature>
<feature type="active site" evidence="1">
    <location>
        <position position="175"/>
    </location>
</feature>
<feature type="active site" evidence="1">
    <location>
        <position position="245"/>
    </location>
</feature>
<feature type="active site" evidence="1">
    <location>
        <position position="248"/>
    </location>
</feature>
<feature type="active site" evidence="1">
    <location>
        <position position="271"/>
    </location>
</feature>
<feature type="active site" description="O-(3'-phospho-DNA)-tyrosine intermediate" evidence="1">
    <location>
        <position position="280"/>
    </location>
</feature>
<keyword id="KW-0131">Cell cycle</keyword>
<keyword id="KW-0132">Cell division</keyword>
<keyword id="KW-0159">Chromosome partition</keyword>
<keyword id="KW-0963">Cytoplasm</keyword>
<keyword id="KW-0229">DNA integration</keyword>
<keyword id="KW-0233">DNA recombination</keyword>
<keyword id="KW-0238">DNA-binding</keyword>
<keyword id="KW-1185">Reference proteome</keyword>
<gene>
    <name evidence="1" type="primary">xerC</name>
    <name type="ordered locus">ABO_2334</name>
</gene>